<protein>
    <recommendedName>
        <fullName evidence="2">D-alanine--D-alanine ligase</fullName>
        <ecNumber evidence="2">6.3.2.4</ecNumber>
    </recommendedName>
    <alternativeName>
        <fullName evidence="2">D-Ala-D-Ala ligase</fullName>
    </alternativeName>
    <alternativeName>
        <fullName evidence="2">D-alanylalanine synthetase</fullName>
    </alternativeName>
</protein>
<accession>Q8A1F3</accession>
<name>DDL_BACTN</name>
<evidence type="ECO:0000250" key="1"/>
<evidence type="ECO:0000255" key="2">
    <source>
        <dbReference type="HAMAP-Rule" id="MF_00047"/>
    </source>
</evidence>
<organism>
    <name type="scientific">Bacteroides thetaiotaomicron (strain ATCC 29148 / DSM 2079 / JCM 5827 / CCUG 10774 / NCTC 10582 / VPI-5482 / E50)</name>
    <dbReference type="NCBI Taxonomy" id="226186"/>
    <lineage>
        <taxon>Bacteria</taxon>
        <taxon>Pseudomonadati</taxon>
        <taxon>Bacteroidota</taxon>
        <taxon>Bacteroidia</taxon>
        <taxon>Bacteroidales</taxon>
        <taxon>Bacteroidaceae</taxon>
        <taxon>Bacteroides</taxon>
    </lineage>
</organism>
<gene>
    <name evidence="2" type="primary">ddl</name>
    <name type="ordered locus">BT_3713</name>
</gene>
<dbReference type="EC" id="6.3.2.4" evidence="2"/>
<dbReference type="EMBL" id="AE015928">
    <property type="protein sequence ID" value="AAO78818.1"/>
    <property type="molecule type" value="Genomic_DNA"/>
</dbReference>
<dbReference type="RefSeq" id="NP_812624.1">
    <property type="nucleotide sequence ID" value="NC_004663.1"/>
</dbReference>
<dbReference type="RefSeq" id="WP_008762649.1">
    <property type="nucleotide sequence ID" value="NC_004663.1"/>
</dbReference>
<dbReference type="SMR" id="Q8A1F3"/>
<dbReference type="FunCoup" id="Q8A1F3">
    <property type="interactions" value="152"/>
</dbReference>
<dbReference type="STRING" id="226186.BT_3713"/>
<dbReference type="PaxDb" id="226186-BT_3713"/>
<dbReference type="EnsemblBacteria" id="AAO78818">
    <property type="protein sequence ID" value="AAO78818"/>
    <property type="gene ID" value="BT_3713"/>
</dbReference>
<dbReference type="KEGG" id="bth:BT_3713"/>
<dbReference type="PATRIC" id="fig|226186.12.peg.3773"/>
<dbReference type="eggNOG" id="COG1181">
    <property type="taxonomic scope" value="Bacteria"/>
</dbReference>
<dbReference type="HOGENOM" id="CLU_039268_1_1_10"/>
<dbReference type="InParanoid" id="Q8A1F3"/>
<dbReference type="OrthoDB" id="9813261at2"/>
<dbReference type="UniPathway" id="UPA00219"/>
<dbReference type="Proteomes" id="UP000001414">
    <property type="component" value="Chromosome"/>
</dbReference>
<dbReference type="GO" id="GO:0005737">
    <property type="term" value="C:cytoplasm"/>
    <property type="evidence" value="ECO:0007669"/>
    <property type="project" value="UniProtKB-SubCell"/>
</dbReference>
<dbReference type="GO" id="GO:0005524">
    <property type="term" value="F:ATP binding"/>
    <property type="evidence" value="ECO:0007669"/>
    <property type="project" value="UniProtKB-KW"/>
</dbReference>
<dbReference type="GO" id="GO:0008716">
    <property type="term" value="F:D-alanine-D-alanine ligase activity"/>
    <property type="evidence" value="ECO:0000318"/>
    <property type="project" value="GO_Central"/>
</dbReference>
<dbReference type="GO" id="GO:0046872">
    <property type="term" value="F:metal ion binding"/>
    <property type="evidence" value="ECO:0007669"/>
    <property type="project" value="UniProtKB-KW"/>
</dbReference>
<dbReference type="GO" id="GO:0071555">
    <property type="term" value="P:cell wall organization"/>
    <property type="evidence" value="ECO:0007669"/>
    <property type="project" value="UniProtKB-KW"/>
</dbReference>
<dbReference type="GO" id="GO:0009252">
    <property type="term" value="P:peptidoglycan biosynthetic process"/>
    <property type="evidence" value="ECO:0007669"/>
    <property type="project" value="UniProtKB-UniRule"/>
</dbReference>
<dbReference type="GO" id="GO:0008360">
    <property type="term" value="P:regulation of cell shape"/>
    <property type="evidence" value="ECO:0007669"/>
    <property type="project" value="UniProtKB-KW"/>
</dbReference>
<dbReference type="FunFam" id="3.30.1490.20:FF:000022">
    <property type="entry name" value="D-alanine--D-alanine ligase"/>
    <property type="match status" value="1"/>
</dbReference>
<dbReference type="FunFam" id="3.40.50.20:FF:000032">
    <property type="entry name" value="D-alanine--D-alanine ligase"/>
    <property type="match status" value="1"/>
</dbReference>
<dbReference type="Gene3D" id="3.40.50.20">
    <property type="match status" value="1"/>
</dbReference>
<dbReference type="Gene3D" id="3.30.1490.20">
    <property type="entry name" value="ATP-grasp fold, A domain"/>
    <property type="match status" value="1"/>
</dbReference>
<dbReference type="Gene3D" id="3.30.470.20">
    <property type="entry name" value="ATP-grasp fold, B domain"/>
    <property type="match status" value="1"/>
</dbReference>
<dbReference type="HAMAP" id="MF_00047">
    <property type="entry name" value="Dala_Dala_lig"/>
    <property type="match status" value="1"/>
</dbReference>
<dbReference type="InterPro" id="IPR011761">
    <property type="entry name" value="ATP-grasp"/>
</dbReference>
<dbReference type="InterPro" id="IPR013815">
    <property type="entry name" value="ATP_grasp_subdomain_1"/>
</dbReference>
<dbReference type="InterPro" id="IPR000291">
    <property type="entry name" value="D-Ala_lig_Van_CS"/>
</dbReference>
<dbReference type="InterPro" id="IPR005905">
    <property type="entry name" value="D_ala_D_ala"/>
</dbReference>
<dbReference type="InterPro" id="IPR011095">
    <property type="entry name" value="Dala_Dala_lig_C"/>
</dbReference>
<dbReference type="InterPro" id="IPR011127">
    <property type="entry name" value="Dala_Dala_lig_N"/>
</dbReference>
<dbReference type="InterPro" id="IPR016185">
    <property type="entry name" value="PreATP-grasp_dom_sf"/>
</dbReference>
<dbReference type="NCBIfam" id="TIGR01205">
    <property type="entry name" value="D_ala_D_alaTIGR"/>
    <property type="match status" value="1"/>
</dbReference>
<dbReference type="NCBIfam" id="NF002378">
    <property type="entry name" value="PRK01372.1"/>
    <property type="match status" value="1"/>
</dbReference>
<dbReference type="NCBIfam" id="NF002527">
    <property type="entry name" value="PRK01966.1-3"/>
    <property type="match status" value="1"/>
</dbReference>
<dbReference type="PANTHER" id="PTHR23132">
    <property type="entry name" value="D-ALANINE--D-ALANINE LIGASE"/>
    <property type="match status" value="1"/>
</dbReference>
<dbReference type="PANTHER" id="PTHR23132:SF23">
    <property type="entry name" value="D-ALANINE--D-ALANINE LIGASE B"/>
    <property type="match status" value="1"/>
</dbReference>
<dbReference type="Pfam" id="PF07478">
    <property type="entry name" value="Dala_Dala_lig_C"/>
    <property type="match status" value="1"/>
</dbReference>
<dbReference type="Pfam" id="PF01820">
    <property type="entry name" value="Dala_Dala_lig_N"/>
    <property type="match status" value="1"/>
</dbReference>
<dbReference type="PIRSF" id="PIRSF039102">
    <property type="entry name" value="Ddl/VanB"/>
    <property type="match status" value="1"/>
</dbReference>
<dbReference type="SUPFAM" id="SSF56059">
    <property type="entry name" value="Glutathione synthetase ATP-binding domain-like"/>
    <property type="match status" value="1"/>
</dbReference>
<dbReference type="SUPFAM" id="SSF52440">
    <property type="entry name" value="PreATP-grasp domain"/>
    <property type="match status" value="1"/>
</dbReference>
<dbReference type="PROSITE" id="PS50975">
    <property type="entry name" value="ATP_GRASP"/>
    <property type="match status" value="1"/>
</dbReference>
<dbReference type="PROSITE" id="PS00843">
    <property type="entry name" value="DALA_DALA_LIGASE_1"/>
    <property type="match status" value="1"/>
</dbReference>
<dbReference type="PROSITE" id="PS00844">
    <property type="entry name" value="DALA_DALA_LIGASE_2"/>
    <property type="match status" value="1"/>
</dbReference>
<reference key="1">
    <citation type="journal article" date="2003" name="Science">
        <title>A genomic view of the human-Bacteroides thetaiotaomicron symbiosis.</title>
        <authorList>
            <person name="Xu J."/>
            <person name="Bjursell M.K."/>
            <person name="Himrod J."/>
            <person name="Deng S."/>
            <person name="Carmichael L.K."/>
            <person name="Chiang H.C."/>
            <person name="Hooper L.V."/>
            <person name="Gordon J.I."/>
        </authorList>
    </citation>
    <scope>NUCLEOTIDE SEQUENCE [LARGE SCALE GENOMIC DNA]</scope>
    <source>
        <strain>ATCC 29148 / DSM 2079 / JCM 5827 / CCUG 10774 / NCTC 10582 / VPI-5482 / E50</strain>
    </source>
</reference>
<sequence length="324" mass="36106">MKRTIAIVAGGDTSEFHVSLRSAQGIYSFIDKEKYTLYIVEMQGTRWEVQLPDGAKAPVDRNDFSFMLGTEKIRFDFAYITIHGTPGEDGRLQGYFDMMHIPYSCCGVLAAAITYDKFTCNQYLKAFGVRIAESLLLRQGQSVSDEDVMEKIGLPCFIKPSLGGSSFGVTKVKTKEQIQPAIVKAFEEAQEVLVEAFMEGTELTCGCYKTKDKTVIFPPTEVVTHNEFFDYDAKYNGQVDEITPARISDELTNRVQMLTSAIYDILGCSGIIRVDYIVTAGEKINLLEVNTTPGMTTTSFIPQQVRAAGLDIKDVMTDIIENKF</sequence>
<keyword id="KW-0067">ATP-binding</keyword>
<keyword id="KW-0133">Cell shape</keyword>
<keyword id="KW-0961">Cell wall biogenesis/degradation</keyword>
<keyword id="KW-0963">Cytoplasm</keyword>
<keyword id="KW-0436">Ligase</keyword>
<keyword id="KW-0460">Magnesium</keyword>
<keyword id="KW-0464">Manganese</keyword>
<keyword id="KW-0479">Metal-binding</keyword>
<keyword id="KW-0547">Nucleotide-binding</keyword>
<keyword id="KW-0573">Peptidoglycan synthesis</keyword>
<keyword id="KW-1185">Reference proteome</keyword>
<proteinExistence type="inferred from homology"/>
<feature type="chain" id="PRO_0000177786" description="D-alanine--D-alanine ligase">
    <location>
        <begin position="1"/>
        <end position="324"/>
    </location>
</feature>
<feature type="domain" description="ATP-grasp" evidence="2">
    <location>
        <begin position="121"/>
        <end position="321"/>
    </location>
</feature>
<feature type="binding site" evidence="2">
    <location>
        <begin position="149"/>
        <end position="204"/>
    </location>
    <ligand>
        <name>ATP</name>
        <dbReference type="ChEBI" id="CHEBI:30616"/>
    </ligand>
</feature>
<feature type="binding site" evidence="2">
    <location>
        <position position="275"/>
    </location>
    <ligand>
        <name>Mg(2+)</name>
        <dbReference type="ChEBI" id="CHEBI:18420"/>
        <label>1</label>
    </ligand>
</feature>
<feature type="binding site" evidence="2">
    <location>
        <position position="288"/>
    </location>
    <ligand>
        <name>Mg(2+)</name>
        <dbReference type="ChEBI" id="CHEBI:18420"/>
        <label>1</label>
    </ligand>
</feature>
<feature type="binding site" evidence="2">
    <location>
        <position position="288"/>
    </location>
    <ligand>
        <name>Mg(2+)</name>
        <dbReference type="ChEBI" id="CHEBI:18420"/>
        <label>2</label>
    </ligand>
</feature>
<feature type="binding site" evidence="2">
    <location>
        <position position="290"/>
    </location>
    <ligand>
        <name>Mg(2+)</name>
        <dbReference type="ChEBI" id="CHEBI:18420"/>
        <label>2</label>
    </ligand>
</feature>
<comment type="function">
    <text evidence="2">Cell wall formation.</text>
</comment>
<comment type="catalytic activity">
    <reaction evidence="2">
        <text>2 D-alanine + ATP = D-alanyl-D-alanine + ADP + phosphate + H(+)</text>
        <dbReference type="Rhea" id="RHEA:11224"/>
        <dbReference type="ChEBI" id="CHEBI:15378"/>
        <dbReference type="ChEBI" id="CHEBI:30616"/>
        <dbReference type="ChEBI" id="CHEBI:43474"/>
        <dbReference type="ChEBI" id="CHEBI:57416"/>
        <dbReference type="ChEBI" id="CHEBI:57822"/>
        <dbReference type="ChEBI" id="CHEBI:456216"/>
        <dbReference type="EC" id="6.3.2.4"/>
    </reaction>
</comment>
<comment type="cofactor">
    <cofactor evidence="1">
        <name>Mg(2+)</name>
        <dbReference type="ChEBI" id="CHEBI:18420"/>
    </cofactor>
    <cofactor evidence="1">
        <name>Mn(2+)</name>
        <dbReference type="ChEBI" id="CHEBI:29035"/>
    </cofactor>
    <text evidence="1">Binds 2 magnesium or manganese ions per subunit.</text>
</comment>
<comment type="pathway">
    <text evidence="2">Cell wall biogenesis; peptidoglycan biosynthesis.</text>
</comment>
<comment type="subcellular location">
    <subcellularLocation>
        <location evidence="2">Cytoplasm</location>
    </subcellularLocation>
</comment>
<comment type="similarity">
    <text evidence="2">Belongs to the D-alanine--D-alanine ligase family.</text>
</comment>